<name>SI1L2_HUMAN</name>
<protein>
    <recommendedName>
        <fullName>Signal-induced proliferation-associated 1-like protein 2</fullName>
        <shortName>SIPA1-like protein 2</shortName>
    </recommendedName>
</protein>
<feature type="chain" id="PRO_0000056749" description="Signal-induced proliferation-associated 1-like protein 2">
    <location>
        <begin position="1"/>
        <end position="1722"/>
    </location>
</feature>
<feature type="domain" description="Rap-GAP" evidence="5">
    <location>
        <begin position="595"/>
        <end position="812"/>
    </location>
</feature>
<feature type="domain" description="PDZ" evidence="4">
    <location>
        <begin position="950"/>
        <end position="1026"/>
    </location>
</feature>
<feature type="region of interest" description="Disordered" evidence="6">
    <location>
        <begin position="1"/>
        <end position="29"/>
    </location>
</feature>
<feature type="region of interest" description="Disordered" evidence="6">
    <location>
        <begin position="42"/>
        <end position="72"/>
    </location>
</feature>
<feature type="region of interest" description="Disordered" evidence="6">
    <location>
        <begin position="360"/>
        <end position="401"/>
    </location>
</feature>
<feature type="region of interest" description="Disordered" evidence="6">
    <location>
        <begin position="1067"/>
        <end position="1245"/>
    </location>
</feature>
<feature type="region of interest" description="Disordered" evidence="6">
    <location>
        <begin position="1330"/>
        <end position="1360"/>
    </location>
</feature>
<feature type="coiled-coil region" evidence="3">
    <location>
        <begin position="1654"/>
        <end position="1712"/>
    </location>
</feature>
<feature type="compositionally biased region" description="Basic and acidic residues" evidence="6">
    <location>
        <begin position="1"/>
        <end position="12"/>
    </location>
</feature>
<feature type="compositionally biased region" description="Polar residues" evidence="6">
    <location>
        <begin position="45"/>
        <end position="56"/>
    </location>
</feature>
<feature type="compositionally biased region" description="Polar residues" evidence="6">
    <location>
        <begin position="360"/>
        <end position="377"/>
    </location>
</feature>
<feature type="compositionally biased region" description="Basic and acidic residues" evidence="6">
    <location>
        <begin position="383"/>
        <end position="401"/>
    </location>
</feature>
<feature type="compositionally biased region" description="Low complexity" evidence="6">
    <location>
        <begin position="1093"/>
        <end position="1102"/>
    </location>
</feature>
<feature type="compositionally biased region" description="Low complexity" evidence="6">
    <location>
        <begin position="1119"/>
        <end position="1130"/>
    </location>
</feature>
<feature type="compositionally biased region" description="Basic and acidic residues" evidence="6">
    <location>
        <begin position="1164"/>
        <end position="1183"/>
    </location>
</feature>
<feature type="compositionally biased region" description="Basic and acidic residues" evidence="6">
    <location>
        <begin position="1194"/>
        <end position="1217"/>
    </location>
</feature>
<feature type="compositionally biased region" description="Low complexity" evidence="6">
    <location>
        <begin position="1219"/>
        <end position="1236"/>
    </location>
</feature>
<feature type="compositionally biased region" description="Low complexity" evidence="6">
    <location>
        <begin position="1337"/>
        <end position="1360"/>
    </location>
</feature>
<feature type="modified residue" description="Phosphoserine" evidence="15 16 19">
    <location>
        <position position="148"/>
    </location>
</feature>
<feature type="modified residue" description="Phosphoserine" evidence="2">
    <location>
        <position position="379"/>
    </location>
</feature>
<feature type="modified residue" description="Phosphoserine" evidence="2">
    <location>
        <position position="383"/>
    </location>
</feature>
<feature type="modified residue" description="Phosphoserine" evidence="19">
    <location>
        <position position="1029"/>
    </location>
</feature>
<feature type="modified residue" description="Phosphoserine" evidence="1">
    <location>
        <position position="1244"/>
    </location>
</feature>
<feature type="modified residue" description="Phosphoserine" evidence="17 18">
    <location>
        <position position="1461"/>
    </location>
</feature>
<feature type="modified residue" description="Phosphoserine" evidence="2">
    <location>
        <position position="1472"/>
    </location>
</feature>
<feature type="modified residue" description="Phosphoserine" evidence="14 15">
    <location>
        <position position="1478"/>
    </location>
</feature>
<feature type="modified residue" description="Phosphoserine" evidence="16">
    <location>
        <position position="1488"/>
    </location>
</feature>
<feature type="modified residue" description="Phosphoserine" evidence="18">
    <location>
        <position position="1549"/>
    </location>
</feature>
<feature type="modified residue" description="Phosphoserine" evidence="18">
    <location>
        <position position="1552"/>
    </location>
</feature>
<feature type="modified residue" description="Phosphoserine" evidence="2">
    <location>
        <position position="1591"/>
    </location>
</feature>
<feature type="splice variant" id="VSP_010920" description="In isoform 2." evidence="11 12">
    <location>
        <begin position="1"/>
        <end position="926"/>
    </location>
</feature>
<feature type="splice variant" id="VSP_010921" description="In isoform 2." evidence="11 12">
    <original>NCAEDIREIVQRLV</original>
    <variation>MSPCFSFIGCKLCS</variation>
    <location>
        <begin position="927"/>
        <end position="940"/>
    </location>
</feature>
<feature type="splice variant" id="VSP_010922" description="In isoform 2." evidence="11 12">
    <location>
        <begin position="1588"/>
        <end position="1605"/>
    </location>
</feature>
<feature type="sequence variant" id="VAR_049153" description="In dbSNP:rs16857502.">
    <original>T</original>
    <variation>A</variation>
    <location>
        <position position="49"/>
    </location>
</feature>
<feature type="sequence variant" id="VAR_049154" description="In dbSNP:rs2275307." evidence="7 8 9 10">
    <original>T</original>
    <variation>A</variation>
    <location>
        <position position="1322"/>
    </location>
</feature>
<feature type="sequence variant" id="VAR_049155" description="In dbSNP:rs1547742.">
    <original>S</original>
    <variation>L</variation>
    <location>
        <position position="1403"/>
    </location>
</feature>
<feature type="sequence variant" id="VAR_061183" description="In dbSNP:rs3210731.">
    <original>M</original>
    <variation>L</variation>
    <location>
        <position position="1424"/>
    </location>
</feature>
<feature type="sequence variant" id="VAR_049156" description="In dbSNP:rs2275303.">
    <original>G</original>
    <variation>S</variation>
    <location>
        <position position="1639"/>
    </location>
</feature>
<feature type="sequence conflict" description="In Ref. 2; BAB14273." evidence="13" ref="2">
    <original>S</original>
    <variation>P</variation>
    <location>
        <position position="1288"/>
    </location>
</feature>
<feature type="sequence conflict" description="In Ref. 2; BAB14273." evidence="13" ref="2">
    <original>D</original>
    <variation>V</variation>
    <location>
        <position position="1308"/>
    </location>
</feature>
<feature type="sequence conflict" description="In Ref. 2; BAB14273." evidence="13" ref="2">
    <original>T</original>
    <variation>I</variation>
    <location>
        <position position="1702"/>
    </location>
</feature>
<accession>Q9P2F8</accession>
<accession>Q2TV88</accession>
<accession>Q5VXR7</accession>
<accession>Q5VXR8</accession>
<accession>Q641Q4</accession>
<accession>Q8NA38</accession>
<accession>Q96DZ3</accession>
<accession>Q9H9F6</accession>
<gene>
    <name type="primary">SIPA1L2</name>
    <name type="synonym">KIAA1389</name>
</gene>
<sequence length="1722" mass="190438">MSDPRQSQEEKHKLGRASSKFKDPPRIMQSDDYFARKFKAINGNMGPTTSLNASNSNETGGGGPANGTPAVPKMGVRARVSEWPPKKDCSKELTCKALWESRSQTSYESITSVLQNGQSDQSEGQQDEQLDLDFVEAKYTIGDIFVHSPQRGLHPIRQRSNSDVTISDIDAEDVLDQNAVNPNTGAALHREYGSTSSIDRQGLSGENFFAMLRGYRVENYDHKAMVPFGFPEFFRCDPAISPSLHAAAQISRGEFVRISGLDYVDSALLMGRDRDKPFKRRLKSESVETSLFRKLRTVKSEHETFKFTSELEESRLERGIRPWNCQRCFAHYDVQSILFNINEAMATRANVGKRKNITTGASAASQTQMPTGQTGNCESPLGSKEDLNSKENLDADEGDGKSNDLVLSCPYFRNETGGEGDRRIALSRANSSSFSSGESCSFESSLSSHCTNAGVSVLEVPRENQPIHREKVKRYIIEHIDLGAYYYRKFFYGKEHQNYFGIDENLGPVAVSIRREKVEDAKEKEGSQFNYRVAFRTSELTTLRGAILEDAIPSTARHGTARGLPLKEVLEYVIPELSIQCLRQASNSPKVSEQLLKLDEQGLSFQHKIGILYCKAGQSTEEEMYNNETAGPAFEEFLDLLGQRVRLKGFSKYRAQLDNKTDSTGTHSLYTTYKDYELMFHVSTLLPYMPNNRQQLLRKRHIGNDIVTIVFQEPGALPFTPKSIRSHFQHVFVIVKVHNPCTENVCYSVGVSRSKDVPPFGPPIPKGVTFPKSAVFRDFLLAKVINAENAAHKSEKFRAMATRTRQEYLKDLAENFVTTATVDTSVKFSFITLGAKKKEKVKPRKDAHLFSIGAIMWHVIARDFGQSADIECLLGISNEFIMLIEKDSKNVVFNCSCRDVIGWTSGLVSIKVFYERGECVLLSSVDNCAEDIREIVQRLVIVTRGCETVEMTLRRNGLGQLGFHVNFEGIVADVEPFGFAWKAGLRQGSRLVEICKVAVATLTHEQMIDLLRTSVTVKVVIIQPHDDGSPRRGCSELCRIPMVEYKLDSEGTPCEYKTPFRRNTTWHRVPTPALQPLSRASPIPGTPDRLPCQQLLQQAQAAIPRSTSFDRKLPDGTRSSPSNQSSSSDPGPGGSGPWRPQVGYDGCQSPLLLEHQGSGPLECDGAREREDTMEASRHPETKWHGPPSKVLGSYKERALQKDGSCKDSPNKLSHIGDKSCSSHSSSNTLSSNTSSNSDDKHFGSGDLMDPELLGLTYIKGASTDSGIDTAPCMPATILGPVHLAGSRSLIHSRAEQWADAADVSGPDDEPAKLYSVHGYASTISAGSAAEGSMGDLSEISSHSSGSHHSGSPSAHCSKSSGSLDSSKVYIVSHSSGQQVPGSMSKPYHRQGAVNKYVIGWKKSEGSPPPEEPEVTECPGMYSEMDVMSTATQHQTVVGDAVAETQHVLSKEDFLKLMLPDSPLVEEGRRKFSFYGNLSPRRSLYRTLSDESICSNRRGSSFGSSRSSVLDQALPNDILFSTTPPYHSTLPPRAHPAPSMGSLRNEFWFSDGSLSDKSKCADPGLMPLPDTATGLDWTHLVDAARAFEGLDSDEELGLLCHHTSYLDQRVASFCTLTDMQHGQDLEGAQELPLCVDPGSGKEFMDTTGERSPSPLTGKVNQLELILRQLQTDLRKEKQDKAVLQAEVQHLRQDNMRLQEESQTATAQLRKFTEWFFTTIDKKS</sequence>
<reference key="1">
    <citation type="submission" date="2002-10" db="EMBL/GenBank/DDBJ databases">
        <authorList>
            <person name="Matsuura K."/>
            <person name="Kohu K."/>
            <person name="Akiyama T."/>
        </authorList>
    </citation>
    <scope>NUCLEOTIDE SEQUENCE [MRNA] (ISOFORM 1)</scope>
    <scope>VARIANT ALA-1322</scope>
</reference>
<reference key="2">
    <citation type="journal article" date="2004" name="Nat. Genet.">
        <title>Complete sequencing and characterization of 21,243 full-length human cDNAs.</title>
        <authorList>
            <person name="Ota T."/>
            <person name="Suzuki Y."/>
            <person name="Nishikawa T."/>
            <person name="Otsuki T."/>
            <person name="Sugiyama T."/>
            <person name="Irie R."/>
            <person name="Wakamatsu A."/>
            <person name="Hayashi K."/>
            <person name="Sato H."/>
            <person name="Nagai K."/>
            <person name="Kimura K."/>
            <person name="Makita H."/>
            <person name="Sekine M."/>
            <person name="Obayashi M."/>
            <person name="Nishi T."/>
            <person name="Shibahara T."/>
            <person name="Tanaka T."/>
            <person name="Ishii S."/>
            <person name="Yamamoto J."/>
            <person name="Saito K."/>
            <person name="Kawai Y."/>
            <person name="Isono Y."/>
            <person name="Nakamura Y."/>
            <person name="Nagahari K."/>
            <person name="Murakami K."/>
            <person name="Yasuda T."/>
            <person name="Iwayanagi T."/>
            <person name="Wagatsuma M."/>
            <person name="Shiratori A."/>
            <person name="Sudo H."/>
            <person name="Hosoiri T."/>
            <person name="Kaku Y."/>
            <person name="Kodaira H."/>
            <person name="Kondo H."/>
            <person name="Sugawara M."/>
            <person name="Takahashi M."/>
            <person name="Kanda K."/>
            <person name="Yokoi T."/>
            <person name="Furuya T."/>
            <person name="Kikkawa E."/>
            <person name="Omura Y."/>
            <person name="Abe K."/>
            <person name="Kamihara K."/>
            <person name="Katsuta N."/>
            <person name="Sato K."/>
            <person name="Tanikawa M."/>
            <person name="Yamazaki M."/>
            <person name="Ninomiya K."/>
            <person name="Ishibashi T."/>
            <person name="Yamashita H."/>
            <person name="Murakawa K."/>
            <person name="Fujimori K."/>
            <person name="Tanai H."/>
            <person name="Kimata M."/>
            <person name="Watanabe M."/>
            <person name="Hiraoka S."/>
            <person name="Chiba Y."/>
            <person name="Ishida S."/>
            <person name="Ono Y."/>
            <person name="Takiguchi S."/>
            <person name="Watanabe S."/>
            <person name="Yosida M."/>
            <person name="Hotuta T."/>
            <person name="Kusano J."/>
            <person name="Kanehori K."/>
            <person name="Takahashi-Fujii A."/>
            <person name="Hara H."/>
            <person name="Tanase T.-O."/>
            <person name="Nomura Y."/>
            <person name="Togiya S."/>
            <person name="Komai F."/>
            <person name="Hara R."/>
            <person name="Takeuchi K."/>
            <person name="Arita M."/>
            <person name="Imose N."/>
            <person name="Musashino K."/>
            <person name="Yuuki H."/>
            <person name="Oshima A."/>
            <person name="Sasaki N."/>
            <person name="Aotsuka S."/>
            <person name="Yoshikawa Y."/>
            <person name="Matsunawa H."/>
            <person name="Ichihara T."/>
            <person name="Shiohata N."/>
            <person name="Sano S."/>
            <person name="Moriya S."/>
            <person name="Momiyama H."/>
            <person name="Satoh N."/>
            <person name="Takami S."/>
            <person name="Terashima Y."/>
            <person name="Suzuki O."/>
            <person name="Nakagawa S."/>
            <person name="Senoh A."/>
            <person name="Mizoguchi H."/>
            <person name="Goto Y."/>
            <person name="Shimizu F."/>
            <person name="Wakebe H."/>
            <person name="Hishigaki H."/>
            <person name="Watanabe T."/>
            <person name="Sugiyama A."/>
            <person name="Takemoto M."/>
            <person name="Kawakami B."/>
            <person name="Yamazaki M."/>
            <person name="Watanabe K."/>
            <person name="Kumagai A."/>
            <person name="Itakura S."/>
            <person name="Fukuzumi Y."/>
            <person name="Fujimori Y."/>
            <person name="Komiyama M."/>
            <person name="Tashiro H."/>
            <person name="Tanigami A."/>
            <person name="Fujiwara T."/>
            <person name="Ono T."/>
            <person name="Yamada K."/>
            <person name="Fujii Y."/>
            <person name="Ozaki K."/>
            <person name="Hirao M."/>
            <person name="Ohmori Y."/>
            <person name="Kawabata A."/>
            <person name="Hikiji T."/>
            <person name="Kobatake N."/>
            <person name="Inagaki H."/>
            <person name="Ikema Y."/>
            <person name="Okamoto S."/>
            <person name="Okitani R."/>
            <person name="Kawakami T."/>
            <person name="Noguchi S."/>
            <person name="Itoh T."/>
            <person name="Shigeta K."/>
            <person name="Senba T."/>
            <person name="Matsumura K."/>
            <person name="Nakajima Y."/>
            <person name="Mizuno T."/>
            <person name="Morinaga M."/>
            <person name="Sasaki M."/>
            <person name="Togashi T."/>
            <person name="Oyama M."/>
            <person name="Hata H."/>
            <person name="Watanabe M."/>
            <person name="Komatsu T."/>
            <person name="Mizushima-Sugano J."/>
            <person name="Satoh T."/>
            <person name="Shirai Y."/>
            <person name="Takahashi Y."/>
            <person name="Nakagawa K."/>
            <person name="Okumura K."/>
            <person name="Nagase T."/>
            <person name="Nomura N."/>
            <person name="Kikuchi H."/>
            <person name="Masuho Y."/>
            <person name="Yamashita R."/>
            <person name="Nakai K."/>
            <person name="Yada T."/>
            <person name="Nakamura Y."/>
            <person name="Ohara O."/>
            <person name="Isogai T."/>
            <person name="Sugano S."/>
        </authorList>
    </citation>
    <scope>NUCLEOTIDE SEQUENCE [LARGE SCALE MRNA] (ISOFORM 2)</scope>
    <source>
        <tissue>Testis</tissue>
    </source>
</reference>
<reference key="3">
    <citation type="journal article" date="2006" name="Nature">
        <title>The DNA sequence and biological annotation of human chromosome 1.</title>
        <authorList>
            <person name="Gregory S.G."/>
            <person name="Barlow K.F."/>
            <person name="McLay K.E."/>
            <person name="Kaul R."/>
            <person name="Swarbreck D."/>
            <person name="Dunham A."/>
            <person name="Scott C.E."/>
            <person name="Howe K.L."/>
            <person name="Woodfine K."/>
            <person name="Spencer C.C.A."/>
            <person name="Jones M.C."/>
            <person name="Gillson C."/>
            <person name="Searle S."/>
            <person name="Zhou Y."/>
            <person name="Kokocinski F."/>
            <person name="McDonald L."/>
            <person name="Evans R."/>
            <person name="Phillips K."/>
            <person name="Atkinson A."/>
            <person name="Cooper R."/>
            <person name="Jones C."/>
            <person name="Hall R.E."/>
            <person name="Andrews T.D."/>
            <person name="Lloyd C."/>
            <person name="Ainscough R."/>
            <person name="Almeida J.P."/>
            <person name="Ambrose K.D."/>
            <person name="Anderson F."/>
            <person name="Andrew R.W."/>
            <person name="Ashwell R.I.S."/>
            <person name="Aubin K."/>
            <person name="Babbage A.K."/>
            <person name="Bagguley C.L."/>
            <person name="Bailey J."/>
            <person name="Beasley H."/>
            <person name="Bethel G."/>
            <person name="Bird C.P."/>
            <person name="Bray-Allen S."/>
            <person name="Brown J.Y."/>
            <person name="Brown A.J."/>
            <person name="Buckley D."/>
            <person name="Burton J."/>
            <person name="Bye J."/>
            <person name="Carder C."/>
            <person name="Chapman J.C."/>
            <person name="Clark S.Y."/>
            <person name="Clarke G."/>
            <person name="Clee C."/>
            <person name="Cobley V."/>
            <person name="Collier R.E."/>
            <person name="Corby N."/>
            <person name="Coville G.J."/>
            <person name="Davies J."/>
            <person name="Deadman R."/>
            <person name="Dunn M."/>
            <person name="Earthrowl M."/>
            <person name="Ellington A.G."/>
            <person name="Errington H."/>
            <person name="Frankish A."/>
            <person name="Frankland J."/>
            <person name="French L."/>
            <person name="Garner P."/>
            <person name="Garnett J."/>
            <person name="Gay L."/>
            <person name="Ghori M.R.J."/>
            <person name="Gibson R."/>
            <person name="Gilby L.M."/>
            <person name="Gillett W."/>
            <person name="Glithero R.J."/>
            <person name="Grafham D.V."/>
            <person name="Griffiths C."/>
            <person name="Griffiths-Jones S."/>
            <person name="Grocock R."/>
            <person name="Hammond S."/>
            <person name="Harrison E.S.I."/>
            <person name="Hart E."/>
            <person name="Haugen E."/>
            <person name="Heath P.D."/>
            <person name="Holmes S."/>
            <person name="Holt K."/>
            <person name="Howden P.J."/>
            <person name="Hunt A.R."/>
            <person name="Hunt S.E."/>
            <person name="Hunter G."/>
            <person name="Isherwood J."/>
            <person name="James R."/>
            <person name="Johnson C."/>
            <person name="Johnson D."/>
            <person name="Joy A."/>
            <person name="Kay M."/>
            <person name="Kershaw J.K."/>
            <person name="Kibukawa M."/>
            <person name="Kimberley A.M."/>
            <person name="King A."/>
            <person name="Knights A.J."/>
            <person name="Lad H."/>
            <person name="Laird G."/>
            <person name="Lawlor S."/>
            <person name="Leongamornlert D.A."/>
            <person name="Lloyd D.M."/>
            <person name="Loveland J."/>
            <person name="Lovell J."/>
            <person name="Lush M.J."/>
            <person name="Lyne R."/>
            <person name="Martin S."/>
            <person name="Mashreghi-Mohammadi M."/>
            <person name="Matthews L."/>
            <person name="Matthews N.S.W."/>
            <person name="McLaren S."/>
            <person name="Milne S."/>
            <person name="Mistry S."/>
            <person name="Moore M.J.F."/>
            <person name="Nickerson T."/>
            <person name="O'Dell C.N."/>
            <person name="Oliver K."/>
            <person name="Palmeiri A."/>
            <person name="Palmer S.A."/>
            <person name="Parker A."/>
            <person name="Patel D."/>
            <person name="Pearce A.V."/>
            <person name="Peck A.I."/>
            <person name="Pelan S."/>
            <person name="Phelps K."/>
            <person name="Phillimore B.J."/>
            <person name="Plumb R."/>
            <person name="Rajan J."/>
            <person name="Raymond C."/>
            <person name="Rouse G."/>
            <person name="Saenphimmachak C."/>
            <person name="Sehra H.K."/>
            <person name="Sheridan E."/>
            <person name="Shownkeen R."/>
            <person name="Sims S."/>
            <person name="Skuce C.D."/>
            <person name="Smith M."/>
            <person name="Steward C."/>
            <person name="Subramanian S."/>
            <person name="Sycamore N."/>
            <person name="Tracey A."/>
            <person name="Tromans A."/>
            <person name="Van Helmond Z."/>
            <person name="Wall M."/>
            <person name="Wallis J.M."/>
            <person name="White S."/>
            <person name="Whitehead S.L."/>
            <person name="Wilkinson J.E."/>
            <person name="Willey D.L."/>
            <person name="Williams H."/>
            <person name="Wilming L."/>
            <person name="Wray P.W."/>
            <person name="Wu Z."/>
            <person name="Coulson A."/>
            <person name="Vaudin M."/>
            <person name="Sulston J.E."/>
            <person name="Durbin R.M."/>
            <person name="Hubbard T."/>
            <person name="Wooster R."/>
            <person name="Dunham I."/>
            <person name="Carter N.P."/>
            <person name="McVean G."/>
            <person name="Ross M.T."/>
            <person name="Harrow J."/>
            <person name="Olson M.V."/>
            <person name="Beck S."/>
            <person name="Rogers J."/>
            <person name="Bentley D.R."/>
        </authorList>
    </citation>
    <scope>NUCLEOTIDE SEQUENCE [LARGE SCALE GENOMIC DNA]</scope>
</reference>
<reference key="4">
    <citation type="submission" date="2005-07" db="EMBL/GenBank/DDBJ databases">
        <authorList>
            <person name="Mural R.J."/>
            <person name="Istrail S."/>
            <person name="Sutton G.G."/>
            <person name="Florea L."/>
            <person name="Halpern A.L."/>
            <person name="Mobarry C.M."/>
            <person name="Lippert R."/>
            <person name="Walenz B."/>
            <person name="Shatkay H."/>
            <person name="Dew I."/>
            <person name="Miller J.R."/>
            <person name="Flanigan M.J."/>
            <person name="Edwards N.J."/>
            <person name="Bolanos R."/>
            <person name="Fasulo D."/>
            <person name="Halldorsson B.V."/>
            <person name="Hannenhalli S."/>
            <person name="Turner R."/>
            <person name="Yooseph S."/>
            <person name="Lu F."/>
            <person name="Nusskern D.R."/>
            <person name="Shue B.C."/>
            <person name="Zheng X.H."/>
            <person name="Zhong F."/>
            <person name="Delcher A.L."/>
            <person name="Huson D.H."/>
            <person name="Kravitz S.A."/>
            <person name="Mouchard L."/>
            <person name="Reinert K."/>
            <person name="Remington K.A."/>
            <person name="Clark A.G."/>
            <person name="Waterman M.S."/>
            <person name="Eichler E.E."/>
            <person name="Adams M.D."/>
            <person name="Hunkapiller M.W."/>
            <person name="Myers E.W."/>
            <person name="Venter J.C."/>
        </authorList>
    </citation>
    <scope>NUCLEOTIDE SEQUENCE [LARGE SCALE GENOMIC DNA]</scope>
    <scope>VARIANT ALA-1322</scope>
</reference>
<reference key="5">
    <citation type="journal article" date="2000" name="DNA Res.">
        <title>Prediction of the coding sequences of unidentified human genes. XVI. The complete sequences of 150 new cDNA clones from brain which code for large proteins in vitro.</title>
        <authorList>
            <person name="Nagase T."/>
            <person name="Kikuno R."/>
            <person name="Ishikawa K."/>
            <person name="Hirosawa M."/>
            <person name="Ohara O."/>
        </authorList>
    </citation>
    <scope>NUCLEOTIDE SEQUENCE [LARGE SCALE MRNA] OF 219-1722 (ISOFORM 1)</scope>
    <scope>VARIANT ALA-1322</scope>
    <source>
        <tissue>Brain</tissue>
    </source>
</reference>
<reference key="6">
    <citation type="journal article" date="2004" name="Genome Res.">
        <title>The status, quality, and expansion of the NIH full-length cDNA project: the Mammalian Gene Collection (MGC).</title>
        <authorList>
            <consortium name="The MGC Project Team"/>
        </authorList>
    </citation>
    <scope>NUCLEOTIDE SEQUENCE [LARGE SCALE MRNA] OF 1065-1722 (ISOFORM 2)</scope>
    <scope>VARIANT ALA-1322</scope>
    <source>
        <tissue>Ovary</tissue>
        <tissue>Salivary gland</tissue>
    </source>
</reference>
<reference key="7">
    <citation type="journal article" date="2004" name="Anal. Chem.">
        <title>Robust phosphoproteomic profiling of tyrosine phosphorylation sites from human T cells using immobilized metal affinity chromatography and tandem mass spectrometry.</title>
        <authorList>
            <person name="Brill L.M."/>
            <person name="Salomon A.R."/>
            <person name="Ficarro S.B."/>
            <person name="Mukherji M."/>
            <person name="Stettler-Gill M."/>
            <person name="Peters E.C."/>
        </authorList>
    </citation>
    <scope>PHOSPHORYLATION [LARGE SCALE ANALYSIS] AT SER-1478</scope>
    <scope>IDENTIFICATION BY MASS SPECTROMETRY [LARGE SCALE ANALYSIS]</scope>
    <source>
        <tissue>Leukemic T-cell</tissue>
    </source>
</reference>
<reference key="8">
    <citation type="journal article" date="2008" name="J. Proteome Res.">
        <title>Combining protein-based IMAC, peptide-based IMAC, and MudPIT for efficient phosphoproteomic analysis.</title>
        <authorList>
            <person name="Cantin G.T."/>
            <person name="Yi W."/>
            <person name="Lu B."/>
            <person name="Park S.K."/>
            <person name="Xu T."/>
            <person name="Lee J.-D."/>
            <person name="Yates J.R. III"/>
        </authorList>
    </citation>
    <scope>PHOSPHORYLATION [LARGE SCALE ANALYSIS] AT SER-148 AND SER-1478</scope>
    <scope>IDENTIFICATION BY MASS SPECTROMETRY [LARGE SCALE ANALYSIS]</scope>
    <source>
        <tissue>Cervix carcinoma</tissue>
    </source>
</reference>
<reference key="9">
    <citation type="journal article" date="2008" name="Proc. Natl. Acad. Sci. U.S.A.">
        <title>A quantitative atlas of mitotic phosphorylation.</title>
        <authorList>
            <person name="Dephoure N."/>
            <person name="Zhou C."/>
            <person name="Villen J."/>
            <person name="Beausoleil S.A."/>
            <person name="Bakalarski C.E."/>
            <person name="Elledge S.J."/>
            <person name="Gygi S.P."/>
        </authorList>
    </citation>
    <scope>PHOSPHORYLATION [LARGE SCALE ANALYSIS] AT SER-148 AND SER-1488</scope>
    <scope>IDENTIFICATION BY MASS SPECTROMETRY [LARGE SCALE ANALYSIS]</scope>
    <source>
        <tissue>Cervix carcinoma</tissue>
    </source>
</reference>
<reference key="10">
    <citation type="journal article" date="2009" name="Anal. Chem.">
        <title>Lys-N and trypsin cover complementary parts of the phosphoproteome in a refined SCX-based approach.</title>
        <authorList>
            <person name="Gauci S."/>
            <person name="Helbig A.O."/>
            <person name="Slijper M."/>
            <person name="Krijgsveld J."/>
            <person name="Heck A.J."/>
            <person name="Mohammed S."/>
        </authorList>
    </citation>
    <scope>IDENTIFICATION BY MASS SPECTROMETRY [LARGE SCALE ANALYSIS]</scope>
</reference>
<reference key="11">
    <citation type="journal article" date="2009" name="Mol. Cell. Proteomics">
        <title>Large-scale proteomics analysis of the human kinome.</title>
        <authorList>
            <person name="Oppermann F.S."/>
            <person name="Gnad F."/>
            <person name="Olsen J.V."/>
            <person name="Hornberger R."/>
            <person name="Greff Z."/>
            <person name="Keri G."/>
            <person name="Mann M."/>
            <person name="Daub H."/>
        </authorList>
    </citation>
    <scope>PHOSPHORYLATION [LARGE SCALE ANALYSIS] AT SER-1461</scope>
    <scope>IDENTIFICATION BY MASS SPECTROMETRY [LARGE SCALE ANALYSIS]</scope>
</reference>
<reference key="12">
    <citation type="journal article" date="2009" name="Sci. Signal.">
        <title>Quantitative phosphoproteomic analysis of T cell receptor signaling reveals system-wide modulation of protein-protein interactions.</title>
        <authorList>
            <person name="Mayya V."/>
            <person name="Lundgren D.H."/>
            <person name="Hwang S.-I."/>
            <person name="Rezaul K."/>
            <person name="Wu L."/>
            <person name="Eng J.K."/>
            <person name="Rodionov V."/>
            <person name="Han D.K."/>
        </authorList>
    </citation>
    <scope>PHOSPHORYLATION [LARGE SCALE ANALYSIS] AT SER-1461; SER-1549 AND SER-1552</scope>
    <scope>IDENTIFICATION BY MASS SPECTROMETRY [LARGE SCALE ANALYSIS]</scope>
    <source>
        <tissue>Leukemic T-cell</tissue>
    </source>
</reference>
<reference key="13">
    <citation type="journal article" date="2010" name="Sci. Signal.">
        <title>Quantitative phosphoproteomics reveals widespread full phosphorylation site occupancy during mitosis.</title>
        <authorList>
            <person name="Olsen J.V."/>
            <person name="Vermeulen M."/>
            <person name="Santamaria A."/>
            <person name="Kumar C."/>
            <person name="Miller M.L."/>
            <person name="Jensen L.J."/>
            <person name="Gnad F."/>
            <person name="Cox J."/>
            <person name="Jensen T.S."/>
            <person name="Nigg E.A."/>
            <person name="Brunak S."/>
            <person name="Mann M."/>
        </authorList>
    </citation>
    <scope>PHOSPHORYLATION [LARGE SCALE ANALYSIS] AT SER-148 AND SER-1029</scope>
    <scope>IDENTIFICATION BY MASS SPECTROMETRY [LARGE SCALE ANALYSIS]</scope>
    <source>
        <tissue>Cervix carcinoma</tissue>
    </source>
</reference>
<reference key="14">
    <citation type="journal article" date="2011" name="Sci. Signal.">
        <title>System-wide temporal characterization of the proteome and phosphoproteome of human embryonic stem cell differentiation.</title>
        <authorList>
            <person name="Rigbolt K.T."/>
            <person name="Prokhorova T.A."/>
            <person name="Akimov V."/>
            <person name="Henningsen J."/>
            <person name="Johansen P.T."/>
            <person name="Kratchmarova I."/>
            <person name="Kassem M."/>
            <person name="Mann M."/>
            <person name="Olsen J.V."/>
            <person name="Blagoev B."/>
        </authorList>
    </citation>
    <scope>IDENTIFICATION BY MASS SPECTROMETRY [LARGE SCALE ANALYSIS]</scope>
</reference>
<reference key="15">
    <citation type="journal article" date="2014" name="J. Proteomics">
        <title>An enzyme assisted RP-RPLC approach for in-depth analysis of human liver phosphoproteome.</title>
        <authorList>
            <person name="Bian Y."/>
            <person name="Song C."/>
            <person name="Cheng K."/>
            <person name="Dong M."/>
            <person name="Wang F."/>
            <person name="Huang J."/>
            <person name="Sun D."/>
            <person name="Wang L."/>
            <person name="Ye M."/>
            <person name="Zou H."/>
        </authorList>
    </citation>
    <scope>IDENTIFICATION BY MASS SPECTROMETRY [LARGE SCALE ANALYSIS]</scope>
    <source>
        <tissue>Liver</tissue>
    </source>
</reference>
<organism>
    <name type="scientific">Homo sapiens</name>
    <name type="common">Human</name>
    <dbReference type="NCBI Taxonomy" id="9606"/>
    <lineage>
        <taxon>Eukaryota</taxon>
        <taxon>Metazoa</taxon>
        <taxon>Chordata</taxon>
        <taxon>Craniata</taxon>
        <taxon>Vertebrata</taxon>
        <taxon>Euteleostomi</taxon>
        <taxon>Mammalia</taxon>
        <taxon>Eutheria</taxon>
        <taxon>Euarchontoglires</taxon>
        <taxon>Primates</taxon>
        <taxon>Haplorrhini</taxon>
        <taxon>Catarrhini</taxon>
        <taxon>Hominidae</taxon>
        <taxon>Homo</taxon>
    </lineage>
</organism>
<comment type="interaction">
    <interactant intactId="EBI-10326741">
        <id>Q9P2F8-2</id>
    </interactant>
    <interactant intactId="EBI-2371151">
        <id>Q9Y2T2</id>
        <label>AP3M1</label>
    </interactant>
    <organismsDiffer>false</organismsDiffer>
    <experiments>6</experiments>
</comment>
<comment type="interaction">
    <interactant intactId="EBI-10326741">
        <id>Q9P2F8-2</id>
    </interactant>
    <interactant intactId="EBI-351257">
        <id>P26196</id>
        <label>DDX6</label>
    </interactant>
    <organismsDiffer>false</organismsDiffer>
    <experiments>5</experiments>
</comment>
<comment type="interaction">
    <interactant intactId="EBI-10326741">
        <id>Q9P2F8-2</id>
    </interactant>
    <interactant intactId="EBI-11955057">
        <id>Q8N8B7-2</id>
        <label>TCEANC</label>
    </interactant>
    <organismsDiffer>false</organismsDiffer>
    <experiments>3</experiments>
</comment>
<comment type="alternative products">
    <event type="alternative splicing"/>
    <isoform>
        <id>Q9P2F8-1</id>
        <name>1</name>
        <sequence type="displayed"/>
    </isoform>
    <isoform>
        <id>Q9P2F8-2</id>
        <name>2</name>
        <sequence type="described" ref="VSP_010920 VSP_010921 VSP_010922"/>
    </isoform>
</comment>
<comment type="sequence caution" evidence="13">
    <conflict type="erroneous initiation">
        <sequence resource="EMBL-CDS" id="BAA92627"/>
    </conflict>
</comment>
<comment type="sequence caution" evidence="13">
    <conflict type="erroneous initiation">
        <sequence resource="EMBL-CDS" id="BAB14273"/>
    </conflict>
</comment>
<keyword id="KW-0025">Alternative splicing</keyword>
<keyword id="KW-0175">Coiled coil</keyword>
<keyword id="KW-0343">GTPase activation</keyword>
<keyword id="KW-0597">Phosphoprotein</keyword>
<keyword id="KW-1267">Proteomics identification</keyword>
<keyword id="KW-1185">Reference proteome</keyword>
<dbReference type="EMBL" id="AY168879">
    <property type="protein sequence ID" value="AAO12530.1"/>
    <property type="molecule type" value="mRNA"/>
</dbReference>
<dbReference type="EMBL" id="AK022852">
    <property type="protein sequence ID" value="BAB14273.1"/>
    <property type="status" value="ALT_INIT"/>
    <property type="molecule type" value="mRNA"/>
</dbReference>
<dbReference type="EMBL" id="AK093191">
    <property type="protein sequence ID" value="BAC04090.1"/>
    <property type="molecule type" value="mRNA"/>
</dbReference>
<dbReference type="EMBL" id="AL356965">
    <property type="status" value="NOT_ANNOTATED_CDS"/>
    <property type="molecule type" value="Genomic_DNA"/>
</dbReference>
<dbReference type="EMBL" id="AL157409">
    <property type="status" value="NOT_ANNOTATED_CDS"/>
    <property type="molecule type" value="Genomic_DNA"/>
</dbReference>
<dbReference type="EMBL" id="AB037810">
    <property type="protein sequence ID" value="BAA92627.1"/>
    <property type="status" value="ALT_INIT"/>
    <property type="molecule type" value="mRNA"/>
</dbReference>
<dbReference type="EMBL" id="CH471098">
    <property type="protein sequence ID" value="EAW69972.1"/>
    <property type="molecule type" value="Genomic_DNA"/>
</dbReference>
<dbReference type="EMBL" id="BC013119">
    <property type="protein sequence ID" value="AAH13119.2"/>
    <property type="molecule type" value="mRNA"/>
</dbReference>
<dbReference type="EMBL" id="BC082251">
    <property type="protein sequence ID" value="AAH82251.1"/>
    <property type="molecule type" value="mRNA"/>
</dbReference>
<dbReference type="CCDS" id="CCDS41474.1">
    <molecule id="Q9P2F8-1"/>
</dbReference>
<dbReference type="RefSeq" id="NP_065859.3">
    <molecule id="Q9P2F8-1"/>
    <property type="nucleotide sequence ID" value="NM_020808.5"/>
</dbReference>
<dbReference type="RefSeq" id="XP_005273268.1">
    <property type="nucleotide sequence ID" value="XM_005273211.2"/>
</dbReference>
<dbReference type="RefSeq" id="XP_005273269.1">
    <property type="nucleotide sequence ID" value="XM_005273212.4"/>
</dbReference>
<dbReference type="RefSeq" id="XP_005273270.1">
    <molecule id="Q9P2F8-1"/>
    <property type="nucleotide sequence ID" value="XM_005273213.5"/>
</dbReference>
<dbReference type="RefSeq" id="XP_011542545.1">
    <property type="nucleotide sequence ID" value="XM_011544243.2"/>
</dbReference>
<dbReference type="RefSeq" id="XP_016857385.1">
    <molecule id="Q9P2F8-1"/>
    <property type="nucleotide sequence ID" value="XM_017001896.2"/>
</dbReference>
<dbReference type="RefSeq" id="XP_047282095.1">
    <molecule id="Q9P2F8-1"/>
    <property type="nucleotide sequence ID" value="XM_047426139.1"/>
</dbReference>
<dbReference type="RefSeq" id="XP_047282096.1">
    <molecule id="Q9P2F8-1"/>
    <property type="nucleotide sequence ID" value="XM_047426140.1"/>
</dbReference>
<dbReference type="RefSeq" id="XP_047282097.1">
    <molecule id="Q9P2F8-1"/>
    <property type="nucleotide sequence ID" value="XM_047426141.1"/>
</dbReference>
<dbReference type="RefSeq" id="XP_047282098.1">
    <molecule id="Q9P2F8-1"/>
    <property type="nucleotide sequence ID" value="XM_047426142.1"/>
</dbReference>
<dbReference type="RefSeq" id="XP_047282099.1">
    <molecule id="Q9P2F8-1"/>
    <property type="nucleotide sequence ID" value="XM_047426143.1"/>
</dbReference>
<dbReference type="RefSeq" id="XP_047282100.1">
    <molecule id="Q9P2F8-1"/>
    <property type="nucleotide sequence ID" value="XM_047426144.1"/>
</dbReference>
<dbReference type="SMR" id="Q9P2F8"/>
<dbReference type="BioGRID" id="121621">
    <property type="interactions" value="133"/>
</dbReference>
<dbReference type="FunCoup" id="Q9P2F8">
    <property type="interactions" value="975"/>
</dbReference>
<dbReference type="IntAct" id="Q9P2F8">
    <property type="interactions" value="79"/>
</dbReference>
<dbReference type="MINT" id="Q9P2F8"/>
<dbReference type="STRING" id="9606.ENSP00000355589"/>
<dbReference type="GlyGen" id="Q9P2F8">
    <property type="glycosylation" value="4 sites, 1 N-linked glycan (1 site), 1 O-linked glycan (1 site)"/>
</dbReference>
<dbReference type="iPTMnet" id="Q9P2F8"/>
<dbReference type="PhosphoSitePlus" id="Q9P2F8"/>
<dbReference type="BioMuta" id="SIPA1L2"/>
<dbReference type="DMDM" id="85681894"/>
<dbReference type="jPOST" id="Q9P2F8"/>
<dbReference type="MassIVE" id="Q9P2F8"/>
<dbReference type="PaxDb" id="9606-ENSP00000355589"/>
<dbReference type="PeptideAtlas" id="Q9P2F8"/>
<dbReference type="ProteomicsDB" id="83807">
    <molecule id="Q9P2F8-1"/>
</dbReference>
<dbReference type="ProteomicsDB" id="83808">
    <molecule id="Q9P2F8-2"/>
</dbReference>
<dbReference type="Pumba" id="Q9P2F8"/>
<dbReference type="Antibodypedia" id="11728">
    <property type="antibodies" value="129 antibodies from 26 providers"/>
</dbReference>
<dbReference type="DNASU" id="57568"/>
<dbReference type="Ensembl" id="ENST00000308942.4">
    <molecule id="Q9P2F8-2"/>
    <property type="protein sequence ID" value="ENSP00000309102.4"/>
    <property type="gene ID" value="ENSG00000116991.12"/>
</dbReference>
<dbReference type="Ensembl" id="ENST00000366630.5">
    <molecule id="Q9P2F8-1"/>
    <property type="protein sequence ID" value="ENSP00000355589.1"/>
    <property type="gene ID" value="ENSG00000116991.12"/>
</dbReference>
<dbReference type="Ensembl" id="ENST00000674635.1">
    <molecule id="Q9P2F8-1"/>
    <property type="protein sequence ID" value="ENSP00000502693.1"/>
    <property type="gene ID" value="ENSG00000116991.12"/>
</dbReference>
<dbReference type="GeneID" id="57568"/>
<dbReference type="KEGG" id="hsa:57568"/>
<dbReference type="MANE-Select" id="ENST00000674635.1">
    <property type="protein sequence ID" value="ENSP00000502693.1"/>
    <property type="RefSeq nucleotide sequence ID" value="NM_020808.5"/>
    <property type="RefSeq protein sequence ID" value="NP_065859.3"/>
</dbReference>
<dbReference type="UCSC" id="uc001hvf.4">
    <molecule id="Q9P2F8-1"/>
    <property type="organism name" value="human"/>
</dbReference>
<dbReference type="AGR" id="HGNC:23800"/>
<dbReference type="CTD" id="57568"/>
<dbReference type="DisGeNET" id="57568"/>
<dbReference type="GeneCards" id="SIPA1L2"/>
<dbReference type="HGNC" id="HGNC:23800">
    <property type="gene designation" value="SIPA1L2"/>
</dbReference>
<dbReference type="HPA" id="ENSG00000116991">
    <property type="expression patterns" value="Low tissue specificity"/>
</dbReference>
<dbReference type="MIM" id="611609">
    <property type="type" value="gene"/>
</dbReference>
<dbReference type="neXtProt" id="NX_Q9P2F8"/>
<dbReference type="OpenTargets" id="ENSG00000116991"/>
<dbReference type="PharmGKB" id="PA134933243"/>
<dbReference type="VEuPathDB" id="HostDB:ENSG00000116991"/>
<dbReference type="eggNOG" id="KOG3686">
    <property type="taxonomic scope" value="Eukaryota"/>
</dbReference>
<dbReference type="GeneTree" id="ENSGT00940000157388"/>
<dbReference type="HOGENOM" id="CLU_002127_0_2_1"/>
<dbReference type="InParanoid" id="Q9P2F8"/>
<dbReference type="OMA" id="GYRVDSY"/>
<dbReference type="OrthoDB" id="2499658at2759"/>
<dbReference type="PAN-GO" id="Q9P2F8">
    <property type="GO annotations" value="3 GO annotations based on evolutionary models"/>
</dbReference>
<dbReference type="PhylomeDB" id="Q9P2F8"/>
<dbReference type="TreeFam" id="TF318626"/>
<dbReference type="PathwayCommons" id="Q9P2F8"/>
<dbReference type="SignaLink" id="Q9P2F8"/>
<dbReference type="BioGRID-ORCS" id="57568">
    <property type="hits" value="6 hits in 1141 CRISPR screens"/>
</dbReference>
<dbReference type="ChiTaRS" id="SIPA1L2">
    <property type="organism name" value="human"/>
</dbReference>
<dbReference type="GeneWiki" id="SIPA1L2"/>
<dbReference type="GenomeRNAi" id="57568"/>
<dbReference type="Pharos" id="Q9P2F8">
    <property type="development level" value="Tbio"/>
</dbReference>
<dbReference type="PRO" id="PR:Q9P2F8"/>
<dbReference type="Proteomes" id="UP000005640">
    <property type="component" value="Chromosome 1"/>
</dbReference>
<dbReference type="RNAct" id="Q9P2F8">
    <property type="molecule type" value="protein"/>
</dbReference>
<dbReference type="Bgee" id="ENSG00000116991">
    <property type="expression patterns" value="Expressed in left ventricle myocardium and 183 other cell types or tissues"/>
</dbReference>
<dbReference type="ExpressionAtlas" id="Q9P2F8">
    <property type="expression patterns" value="baseline and differential"/>
</dbReference>
<dbReference type="GO" id="GO:0005737">
    <property type="term" value="C:cytoplasm"/>
    <property type="evidence" value="ECO:0000318"/>
    <property type="project" value="GO_Central"/>
</dbReference>
<dbReference type="GO" id="GO:0098978">
    <property type="term" value="C:glutamatergic synapse"/>
    <property type="evidence" value="ECO:0007669"/>
    <property type="project" value="Ensembl"/>
</dbReference>
<dbReference type="GO" id="GO:0005096">
    <property type="term" value="F:GTPase activator activity"/>
    <property type="evidence" value="ECO:0000318"/>
    <property type="project" value="GO_Central"/>
</dbReference>
<dbReference type="GO" id="GO:0098928">
    <property type="term" value="P:presynaptic signal transduction"/>
    <property type="evidence" value="ECO:0007669"/>
    <property type="project" value="Ensembl"/>
</dbReference>
<dbReference type="GO" id="GO:0051056">
    <property type="term" value="P:regulation of small GTPase mediated signal transduction"/>
    <property type="evidence" value="ECO:0007669"/>
    <property type="project" value="InterPro"/>
</dbReference>
<dbReference type="CDD" id="cd06745">
    <property type="entry name" value="PDZ_SIPA1-like"/>
    <property type="match status" value="1"/>
</dbReference>
<dbReference type="FunFam" id="3.40.50.11210:FF:000002">
    <property type="entry name" value="Signal-induced proliferation-associated 1-like protein 1"/>
    <property type="match status" value="1"/>
</dbReference>
<dbReference type="FunFam" id="2.30.42.10:FF:000027">
    <property type="entry name" value="Signal-induced proliferation-associated 1-like protein 1 isoform 2"/>
    <property type="match status" value="1"/>
</dbReference>
<dbReference type="Gene3D" id="2.30.42.10">
    <property type="match status" value="1"/>
</dbReference>
<dbReference type="Gene3D" id="6.10.140.210">
    <property type="match status" value="1"/>
</dbReference>
<dbReference type="Gene3D" id="3.40.50.11210">
    <property type="entry name" value="Rap/Ran-GAP"/>
    <property type="match status" value="1"/>
</dbReference>
<dbReference type="InterPro" id="IPR001478">
    <property type="entry name" value="PDZ"/>
</dbReference>
<dbReference type="InterPro" id="IPR036034">
    <property type="entry name" value="PDZ_sf"/>
</dbReference>
<dbReference type="InterPro" id="IPR035974">
    <property type="entry name" value="Rap/Ran-GAP_sf"/>
</dbReference>
<dbReference type="InterPro" id="IPR000331">
    <property type="entry name" value="Rap/Ran_GAP_dom"/>
</dbReference>
<dbReference type="InterPro" id="IPR050989">
    <property type="entry name" value="Rap1_Ran_GAP"/>
</dbReference>
<dbReference type="InterPro" id="IPR021818">
    <property type="entry name" value="SIPA1L_C"/>
</dbReference>
<dbReference type="PANTHER" id="PTHR15711">
    <property type="entry name" value="RAP GTPASE-ACTIVATING PROTEIN"/>
    <property type="match status" value="1"/>
</dbReference>
<dbReference type="PANTHER" id="PTHR15711:SF7">
    <property type="entry name" value="SIGNAL-INDUCED PROLIFERATION-ASSOCIATED 1-LIKE PROTEIN 2"/>
    <property type="match status" value="1"/>
</dbReference>
<dbReference type="Pfam" id="PF00595">
    <property type="entry name" value="PDZ"/>
    <property type="match status" value="1"/>
</dbReference>
<dbReference type="Pfam" id="PF21022">
    <property type="entry name" value="Rap-GAP_dimer"/>
    <property type="match status" value="1"/>
</dbReference>
<dbReference type="Pfam" id="PF02145">
    <property type="entry name" value="Rap_GAP"/>
    <property type="match status" value="1"/>
</dbReference>
<dbReference type="Pfam" id="PF11881">
    <property type="entry name" value="SPAR_C"/>
    <property type="match status" value="1"/>
</dbReference>
<dbReference type="SMART" id="SM00228">
    <property type="entry name" value="PDZ"/>
    <property type="match status" value="1"/>
</dbReference>
<dbReference type="SUPFAM" id="SSF50156">
    <property type="entry name" value="PDZ domain-like"/>
    <property type="match status" value="1"/>
</dbReference>
<dbReference type="SUPFAM" id="SSF111347">
    <property type="entry name" value="Rap/Ran-GAP"/>
    <property type="match status" value="1"/>
</dbReference>
<dbReference type="PROSITE" id="PS50106">
    <property type="entry name" value="PDZ"/>
    <property type="match status" value="1"/>
</dbReference>
<dbReference type="PROSITE" id="PS50085">
    <property type="entry name" value="RAPGAP"/>
    <property type="match status" value="1"/>
</dbReference>
<proteinExistence type="evidence at protein level"/>
<evidence type="ECO:0000250" key="1">
    <source>
        <dbReference type="UniProtKB" id="Q5JCS6"/>
    </source>
</evidence>
<evidence type="ECO:0000250" key="2">
    <source>
        <dbReference type="UniProtKB" id="Q80TE4"/>
    </source>
</evidence>
<evidence type="ECO:0000255" key="3"/>
<evidence type="ECO:0000255" key="4">
    <source>
        <dbReference type="PROSITE-ProRule" id="PRU00143"/>
    </source>
</evidence>
<evidence type="ECO:0000255" key="5">
    <source>
        <dbReference type="PROSITE-ProRule" id="PRU00165"/>
    </source>
</evidence>
<evidence type="ECO:0000256" key="6">
    <source>
        <dbReference type="SAM" id="MobiDB-lite"/>
    </source>
</evidence>
<evidence type="ECO:0000269" key="7">
    <source>
    </source>
</evidence>
<evidence type="ECO:0000269" key="8">
    <source>
    </source>
</evidence>
<evidence type="ECO:0000269" key="9">
    <source ref="1"/>
</evidence>
<evidence type="ECO:0000269" key="10">
    <source ref="4"/>
</evidence>
<evidence type="ECO:0000303" key="11">
    <source>
    </source>
</evidence>
<evidence type="ECO:0000303" key="12">
    <source>
    </source>
</evidence>
<evidence type="ECO:0000305" key="13"/>
<evidence type="ECO:0007744" key="14">
    <source>
    </source>
</evidence>
<evidence type="ECO:0007744" key="15">
    <source>
    </source>
</evidence>
<evidence type="ECO:0007744" key="16">
    <source>
    </source>
</evidence>
<evidence type="ECO:0007744" key="17">
    <source>
    </source>
</evidence>
<evidence type="ECO:0007744" key="18">
    <source>
    </source>
</evidence>
<evidence type="ECO:0007744" key="19">
    <source>
    </source>
</evidence>